<feature type="chain" id="PRO_5000089546" description="DNA-directed RNA polymerase II subunit GRINL1A">
    <location>
        <begin position="1"/>
        <end position="368"/>
    </location>
</feature>
<feature type="region of interest" description="Important for transcription repressor activity" evidence="5">
    <location>
        <begin position="29"/>
        <end position="68"/>
    </location>
</feature>
<feature type="region of interest" description="Disordered" evidence="2">
    <location>
        <begin position="116"/>
        <end position="186"/>
    </location>
</feature>
<feature type="region of interest" description="Disordered" evidence="2">
    <location>
        <begin position="203"/>
        <end position="227"/>
    </location>
</feature>
<feature type="region of interest" description="Interaction with Pol II" evidence="5">
    <location>
        <begin position="227"/>
        <end position="298"/>
    </location>
</feature>
<feature type="region of interest" description="Disordered" evidence="2">
    <location>
        <begin position="255"/>
        <end position="282"/>
    </location>
</feature>
<feature type="region of interest" description="Important for transcription repressor activity" evidence="5">
    <location>
        <begin position="299"/>
        <end position="314"/>
    </location>
</feature>
<feature type="region of interest" description="Interaction with Pol II" evidence="5">
    <location>
        <begin position="315"/>
        <end position="340"/>
    </location>
</feature>
<feature type="region of interest" description="Disordered" evidence="2">
    <location>
        <begin position="339"/>
        <end position="368"/>
    </location>
</feature>
<feature type="coiled-coil region" evidence="1">
    <location>
        <begin position="301"/>
        <end position="335"/>
    </location>
</feature>
<feature type="compositionally biased region" description="Polar residues" evidence="2">
    <location>
        <begin position="116"/>
        <end position="131"/>
    </location>
</feature>
<feature type="compositionally biased region" description="Polar residues" evidence="2">
    <location>
        <begin position="205"/>
        <end position="224"/>
    </location>
</feature>
<feature type="compositionally biased region" description="Polar residues" evidence="2">
    <location>
        <begin position="258"/>
        <end position="273"/>
    </location>
</feature>
<feature type="compositionally biased region" description="Acidic residues" evidence="2">
    <location>
        <begin position="358"/>
        <end position="368"/>
    </location>
</feature>
<feature type="modified residue" description="Phosphoserine" evidence="6">
    <location>
        <position position="270"/>
    </location>
</feature>
<feature type="splice variant" id="VSP_037387" description="In isoform 2." evidence="7 8">
    <location>
        <begin position="39"/>
        <end position="195"/>
    </location>
</feature>
<feature type="splice variant" id="VSP_037388" description="In isoform 3." evidence="7">
    <original>MQAKLAAQKLAERLNIKMRSYNPEGESSGRYREVRDEDDDWSSDEF</original>
    <variation>RPFYSPQYRSSMNLLSLAAAAKDTRGSKSGKMGSLALLTKL</variation>
    <location>
        <begin position="323"/>
        <end position="368"/>
    </location>
</feature>
<feature type="mutagenesis site" description="Abolishes the interaction with Pol II." evidence="5">
    <original>KR</original>
    <variation>DD</variation>
    <location>
        <begin position="29"/>
        <end position="30"/>
    </location>
</feature>
<feature type="mutagenesis site" description="Stabilizes the interaction with Pol II." evidence="5">
    <original>E</original>
    <variation>K</variation>
    <location>
        <position position="32"/>
    </location>
</feature>
<feature type="mutagenesis site" description="Markedly reduces the interaction with Pol II." evidence="5">
    <original>R</original>
    <variation>D</variation>
    <location>
        <position position="33"/>
    </location>
</feature>
<feature type="mutagenesis site" description="Markedly reduces the interaction with Pol II." evidence="5">
    <original>KK</original>
    <variation>DD</variation>
    <location>
        <begin position="49"/>
        <end position="50"/>
    </location>
</feature>
<feature type="mutagenesis site" description="Stabilizes the interaction with Pol II." evidence="5">
    <original>D</original>
    <variation>K</variation>
    <location>
        <position position="53"/>
    </location>
</feature>
<feature type="mutagenesis site" description="Stabilizes the interaction with Pol II." evidence="5">
    <original>EE</original>
    <variation>KK</variation>
    <location>
        <begin position="66"/>
        <end position="67"/>
    </location>
</feature>
<feature type="mutagenesis site" description="Loss of transcription repressor activity. Abolishes the interaction with Pol II." evidence="5">
    <original>LL</original>
    <variation>AA</variation>
    <location>
        <begin position="303"/>
        <end position="304"/>
    </location>
</feature>
<feature type="sequence conflict" description="In Ref. 7; CAB43263." evidence="9" ref="7">
    <original>H</original>
    <variation>D</variation>
    <location>
        <position position="171"/>
    </location>
</feature>
<sequence length="368" mass="41740">MCSLPRGFEPQAPEDLAQRSLVELREMLKRQERLLRNEKFICKLPDKGKKIFDSFAKLKAAIAECEEVRRKSELFNPVSLDCKLRQKAIAEVDVGTDKAQNSDPILDTSSLVPGCSSVDNIKSSQTSQNQGLGRPTLEGDEETSEVEYTVNKGPASSNRDRVPPSSEASEHHPRHRVSSQAEDTSSSFDNLFIDRLQRITIADQGEQQSEENASTKNLTGLSSGTEKKPHYMEVLEMRAKNPVPQLRKFKTNVLPFRQNDSSSHCQKSGSPISSEERRRRDKQHLDDITAARLLPLHHMPTQLLSIEESLALQKQQKQNYEEMQAKLAAQKLAERLNIKMRSYNPEGESSGRYREVRDEDDDWSSDEF</sequence>
<evidence type="ECO:0000255" key="1"/>
<evidence type="ECO:0000256" key="2">
    <source>
        <dbReference type="SAM" id="MobiDB-lite"/>
    </source>
</evidence>
<evidence type="ECO:0000269" key="3">
    <source>
    </source>
</evidence>
<evidence type="ECO:0000269" key="4">
    <source>
    </source>
</evidence>
<evidence type="ECO:0000269" key="5">
    <source>
    </source>
</evidence>
<evidence type="ECO:0000269" key="6">
    <source>
    </source>
</evidence>
<evidence type="ECO:0000303" key="7">
    <source>
    </source>
</evidence>
<evidence type="ECO:0000303" key="8">
    <source>
    </source>
</evidence>
<evidence type="ECO:0000305" key="9"/>
<protein>
    <recommendedName>
        <fullName>DNA-directed RNA polymerase II subunit GRINL1A</fullName>
    </recommendedName>
    <alternativeName>
        <fullName>DNA-directed RNA polymerase II subunit M</fullName>
    </alternativeName>
    <alternativeName>
        <fullName>Glutamate receptor-like protein 1A</fullName>
    </alternativeName>
</protein>
<reference key="1">
    <citation type="journal article" date="2001" name="Cytogenet. Cell Genet.">
        <title>Assignment of an ionotropic glutamate receptor-like gene (GRINL1A) to human chromosome 15q22.1 by in situ hybridization.</title>
        <authorList>
            <person name="Roginski R.S."/>
            <person name="Mohan Raj B.K."/>
            <person name="Finkernagel S.W."/>
            <person name="Sciorra L.J."/>
        </authorList>
    </citation>
    <scope>NUCLEOTIDE SEQUENCE [MRNA] (ISOFORM 1)</scope>
    <source>
        <tissue>Brain</tissue>
    </source>
</reference>
<reference key="2">
    <citation type="journal article" date="2004" name="Genomics">
        <title>The human GRINL1A gene defines a complex transcription unit, an unusual form of gene organization in eukaryotes.</title>
        <authorList>
            <person name="Roginski R.S."/>
            <person name="Mohan Raj B.K."/>
            <person name="Birditt B."/>
            <person name="Rowen L."/>
        </authorList>
    </citation>
    <scope>NUCLEOTIDE SEQUENCE [MRNA] (ISOFORMS 1; 2 AND 11)</scope>
    <scope>TISSUE SPECIFICITY</scope>
    <source>
        <tissue>Brain</tissue>
        <tissue>Lung</tissue>
    </source>
</reference>
<reference key="3">
    <citation type="journal article" date="2004" name="Nat. Genet.">
        <title>Complete sequencing and characterization of 21,243 full-length human cDNAs.</title>
        <authorList>
            <person name="Ota T."/>
            <person name="Suzuki Y."/>
            <person name="Nishikawa T."/>
            <person name="Otsuki T."/>
            <person name="Sugiyama T."/>
            <person name="Irie R."/>
            <person name="Wakamatsu A."/>
            <person name="Hayashi K."/>
            <person name="Sato H."/>
            <person name="Nagai K."/>
            <person name="Kimura K."/>
            <person name="Makita H."/>
            <person name="Sekine M."/>
            <person name="Obayashi M."/>
            <person name="Nishi T."/>
            <person name="Shibahara T."/>
            <person name="Tanaka T."/>
            <person name="Ishii S."/>
            <person name="Yamamoto J."/>
            <person name="Saito K."/>
            <person name="Kawai Y."/>
            <person name="Isono Y."/>
            <person name="Nakamura Y."/>
            <person name="Nagahari K."/>
            <person name="Murakami K."/>
            <person name="Yasuda T."/>
            <person name="Iwayanagi T."/>
            <person name="Wagatsuma M."/>
            <person name="Shiratori A."/>
            <person name="Sudo H."/>
            <person name="Hosoiri T."/>
            <person name="Kaku Y."/>
            <person name="Kodaira H."/>
            <person name="Kondo H."/>
            <person name="Sugawara M."/>
            <person name="Takahashi M."/>
            <person name="Kanda K."/>
            <person name="Yokoi T."/>
            <person name="Furuya T."/>
            <person name="Kikkawa E."/>
            <person name="Omura Y."/>
            <person name="Abe K."/>
            <person name="Kamihara K."/>
            <person name="Katsuta N."/>
            <person name="Sato K."/>
            <person name="Tanikawa M."/>
            <person name="Yamazaki M."/>
            <person name="Ninomiya K."/>
            <person name="Ishibashi T."/>
            <person name="Yamashita H."/>
            <person name="Murakawa K."/>
            <person name="Fujimori K."/>
            <person name="Tanai H."/>
            <person name="Kimata M."/>
            <person name="Watanabe M."/>
            <person name="Hiraoka S."/>
            <person name="Chiba Y."/>
            <person name="Ishida S."/>
            <person name="Ono Y."/>
            <person name="Takiguchi S."/>
            <person name="Watanabe S."/>
            <person name="Yosida M."/>
            <person name="Hotuta T."/>
            <person name="Kusano J."/>
            <person name="Kanehori K."/>
            <person name="Takahashi-Fujii A."/>
            <person name="Hara H."/>
            <person name="Tanase T.-O."/>
            <person name="Nomura Y."/>
            <person name="Togiya S."/>
            <person name="Komai F."/>
            <person name="Hara R."/>
            <person name="Takeuchi K."/>
            <person name="Arita M."/>
            <person name="Imose N."/>
            <person name="Musashino K."/>
            <person name="Yuuki H."/>
            <person name="Oshima A."/>
            <person name="Sasaki N."/>
            <person name="Aotsuka S."/>
            <person name="Yoshikawa Y."/>
            <person name="Matsunawa H."/>
            <person name="Ichihara T."/>
            <person name="Shiohata N."/>
            <person name="Sano S."/>
            <person name="Moriya S."/>
            <person name="Momiyama H."/>
            <person name="Satoh N."/>
            <person name="Takami S."/>
            <person name="Terashima Y."/>
            <person name="Suzuki O."/>
            <person name="Nakagawa S."/>
            <person name="Senoh A."/>
            <person name="Mizoguchi H."/>
            <person name="Goto Y."/>
            <person name="Shimizu F."/>
            <person name="Wakebe H."/>
            <person name="Hishigaki H."/>
            <person name="Watanabe T."/>
            <person name="Sugiyama A."/>
            <person name="Takemoto M."/>
            <person name="Kawakami B."/>
            <person name="Yamazaki M."/>
            <person name="Watanabe K."/>
            <person name="Kumagai A."/>
            <person name="Itakura S."/>
            <person name="Fukuzumi Y."/>
            <person name="Fujimori Y."/>
            <person name="Komiyama M."/>
            <person name="Tashiro H."/>
            <person name="Tanigami A."/>
            <person name="Fujiwara T."/>
            <person name="Ono T."/>
            <person name="Yamada K."/>
            <person name="Fujii Y."/>
            <person name="Ozaki K."/>
            <person name="Hirao M."/>
            <person name="Ohmori Y."/>
            <person name="Kawabata A."/>
            <person name="Hikiji T."/>
            <person name="Kobatake N."/>
            <person name="Inagaki H."/>
            <person name="Ikema Y."/>
            <person name="Okamoto S."/>
            <person name="Okitani R."/>
            <person name="Kawakami T."/>
            <person name="Noguchi S."/>
            <person name="Itoh T."/>
            <person name="Shigeta K."/>
            <person name="Senba T."/>
            <person name="Matsumura K."/>
            <person name="Nakajima Y."/>
            <person name="Mizuno T."/>
            <person name="Morinaga M."/>
            <person name="Sasaki M."/>
            <person name="Togashi T."/>
            <person name="Oyama M."/>
            <person name="Hata H."/>
            <person name="Watanabe M."/>
            <person name="Komatsu T."/>
            <person name="Mizushima-Sugano J."/>
            <person name="Satoh T."/>
            <person name="Shirai Y."/>
            <person name="Takahashi Y."/>
            <person name="Nakagawa K."/>
            <person name="Okumura K."/>
            <person name="Nagase T."/>
            <person name="Nomura N."/>
            <person name="Kikuchi H."/>
            <person name="Masuho Y."/>
            <person name="Yamashita R."/>
            <person name="Nakai K."/>
            <person name="Yada T."/>
            <person name="Nakamura Y."/>
            <person name="Ohara O."/>
            <person name="Isogai T."/>
            <person name="Sugano S."/>
        </authorList>
    </citation>
    <scope>NUCLEOTIDE SEQUENCE [LARGE SCALE MRNA] (ISOFORMS 1; 2 AND 3)</scope>
    <source>
        <tissue>Heart</tissue>
    </source>
</reference>
<reference key="4">
    <citation type="journal article" date="2006" name="Nature">
        <title>Analysis of the DNA sequence and duplication history of human chromosome 15.</title>
        <authorList>
            <person name="Zody M.C."/>
            <person name="Garber M."/>
            <person name="Sharpe T."/>
            <person name="Young S.K."/>
            <person name="Rowen L."/>
            <person name="O'Neill K."/>
            <person name="Whittaker C.A."/>
            <person name="Kamal M."/>
            <person name="Chang J.L."/>
            <person name="Cuomo C.A."/>
            <person name="Dewar K."/>
            <person name="FitzGerald M.G."/>
            <person name="Kodira C.D."/>
            <person name="Madan A."/>
            <person name="Qin S."/>
            <person name="Yang X."/>
            <person name="Abbasi N."/>
            <person name="Abouelleil A."/>
            <person name="Arachchi H.M."/>
            <person name="Baradarani L."/>
            <person name="Birditt B."/>
            <person name="Bloom S."/>
            <person name="Bloom T."/>
            <person name="Borowsky M.L."/>
            <person name="Burke J."/>
            <person name="Butler J."/>
            <person name="Cook A."/>
            <person name="DeArellano K."/>
            <person name="DeCaprio D."/>
            <person name="Dorris L. III"/>
            <person name="Dors M."/>
            <person name="Eichler E.E."/>
            <person name="Engels R."/>
            <person name="Fahey J."/>
            <person name="Fleetwood P."/>
            <person name="Friedman C."/>
            <person name="Gearin G."/>
            <person name="Hall J.L."/>
            <person name="Hensley G."/>
            <person name="Johnson E."/>
            <person name="Jones C."/>
            <person name="Kamat A."/>
            <person name="Kaur A."/>
            <person name="Locke D.P."/>
            <person name="Madan A."/>
            <person name="Munson G."/>
            <person name="Jaffe D.B."/>
            <person name="Lui A."/>
            <person name="Macdonald P."/>
            <person name="Mauceli E."/>
            <person name="Naylor J.W."/>
            <person name="Nesbitt R."/>
            <person name="Nicol R."/>
            <person name="O'Leary S.B."/>
            <person name="Ratcliffe A."/>
            <person name="Rounsley S."/>
            <person name="She X."/>
            <person name="Sneddon K.M.B."/>
            <person name="Stewart S."/>
            <person name="Sougnez C."/>
            <person name="Stone S.M."/>
            <person name="Topham K."/>
            <person name="Vincent D."/>
            <person name="Wang S."/>
            <person name="Zimmer A.R."/>
            <person name="Birren B.W."/>
            <person name="Hood L."/>
            <person name="Lander E.S."/>
            <person name="Nusbaum C."/>
        </authorList>
    </citation>
    <scope>NUCLEOTIDE SEQUENCE [LARGE SCALE GENOMIC DNA]</scope>
</reference>
<reference key="5">
    <citation type="submission" date="2005-07" db="EMBL/GenBank/DDBJ databases">
        <authorList>
            <person name="Mural R.J."/>
            <person name="Istrail S."/>
            <person name="Sutton G.G."/>
            <person name="Florea L."/>
            <person name="Halpern A.L."/>
            <person name="Mobarry C.M."/>
            <person name="Lippert R."/>
            <person name="Walenz B."/>
            <person name="Shatkay H."/>
            <person name="Dew I."/>
            <person name="Miller J.R."/>
            <person name="Flanigan M.J."/>
            <person name="Edwards N.J."/>
            <person name="Bolanos R."/>
            <person name="Fasulo D."/>
            <person name="Halldorsson B.V."/>
            <person name="Hannenhalli S."/>
            <person name="Turner R."/>
            <person name="Yooseph S."/>
            <person name="Lu F."/>
            <person name="Nusskern D.R."/>
            <person name="Shue B.C."/>
            <person name="Zheng X.H."/>
            <person name="Zhong F."/>
            <person name="Delcher A.L."/>
            <person name="Huson D.H."/>
            <person name="Kravitz S.A."/>
            <person name="Mouchard L."/>
            <person name="Reinert K."/>
            <person name="Remington K.A."/>
            <person name="Clark A.G."/>
            <person name="Waterman M.S."/>
            <person name="Eichler E.E."/>
            <person name="Adams M.D."/>
            <person name="Hunkapiller M.W."/>
            <person name="Myers E.W."/>
            <person name="Venter J.C."/>
        </authorList>
    </citation>
    <scope>NUCLEOTIDE SEQUENCE [LARGE SCALE GENOMIC DNA]</scope>
</reference>
<reference key="6">
    <citation type="journal article" date="2004" name="Genome Res.">
        <title>The status, quality, and expansion of the NIH full-length cDNA project: the Mammalian Gene Collection (MGC).</title>
        <authorList>
            <consortium name="The MGC Project Team"/>
        </authorList>
    </citation>
    <scope>NUCLEOTIDE SEQUENCE [LARGE SCALE MRNA] (ISOFORM 1)</scope>
    <source>
        <tissue>Brain cortex</tissue>
    </source>
</reference>
<reference key="7">
    <citation type="journal article" date="2007" name="BMC Genomics">
        <title>The full-ORF clone resource of the German cDNA consortium.</title>
        <authorList>
            <person name="Bechtel S."/>
            <person name="Rosenfelder H."/>
            <person name="Duda A."/>
            <person name="Schmidt C.P."/>
            <person name="Ernst U."/>
            <person name="Wellenreuther R."/>
            <person name="Mehrle A."/>
            <person name="Schuster C."/>
            <person name="Bahr A."/>
            <person name="Bloecker H."/>
            <person name="Heubner D."/>
            <person name="Hoerlein A."/>
            <person name="Michel G."/>
            <person name="Wedler H."/>
            <person name="Koehrer K."/>
            <person name="Ottenwaelder B."/>
            <person name="Poustka A."/>
            <person name="Wiemann S."/>
            <person name="Schupp I."/>
        </authorList>
    </citation>
    <scope>NUCLEOTIDE SEQUENCE [LARGE SCALE MRNA] OF 171-368</scope>
    <source>
        <tissue>Uterus</tissue>
    </source>
</reference>
<reference key="8">
    <citation type="journal article" date="2004" name="Mol. Cell">
        <title>A set of consensus mammalian mediator subunits identified by multidimensional protein identification technology.</title>
        <authorList>
            <person name="Sato S."/>
            <person name="Tomomori-Sato C."/>
            <person name="Parmely T.J."/>
            <person name="Florens L."/>
            <person name="Zybailov B."/>
            <person name="Swanson S.K."/>
            <person name="Banks C.A.S."/>
            <person name="Jin J."/>
            <person name="Cai Y."/>
            <person name="Washburn M.P."/>
            <person name="Conaway J.W."/>
            <person name="Conaway R.C."/>
        </authorList>
    </citation>
    <scope>IDENTIFICATION BY MASS SPECTROMETRY</scope>
</reference>
<reference key="9">
    <citation type="journal article" date="2006" name="Proc. Natl. Acad. Sci. U.S.A.">
        <title>A Mediator-responsive form of metazoan RNA polymerase II.</title>
        <authorList>
            <person name="Hu X."/>
            <person name="Malik S."/>
            <person name="Negroiu C.C."/>
            <person name="Hubbard K."/>
            <person name="Velalar C.N."/>
            <person name="Hampton B."/>
            <person name="Grosu D."/>
            <person name="Catalano J."/>
            <person name="Roeder R.G."/>
            <person name="Gnatt A."/>
        </authorList>
    </citation>
    <scope>FUNCTION (ISOFORM I)</scope>
    <scope>RECONSTITUTION OF THE POL II(G) COMPLEX (ISOFORM I)</scope>
</reference>
<reference key="10">
    <citation type="journal article" date="2024" name="Mol. Cell">
        <title>The phosphatase PP1 sustains global transcription by promoting RNA polymerase II pause release.</title>
        <authorList>
            <person name="Wang Z."/>
            <person name="Song A."/>
            <person name="Tao B."/>
            <person name="Miao M."/>
            <person name="Luo Y.Q."/>
            <person name="Wang J."/>
            <person name="Yin Z."/>
            <person name="Xiao R."/>
            <person name="Zhou X."/>
            <person name="Shang X.Y."/>
            <person name="Hu S."/>
            <person name="Liang K."/>
            <person name="Danko C.G."/>
            <person name="Chen F.X."/>
        </authorList>
    </citation>
    <scope>PHOSPHORYLATION AT SER-270</scope>
    <scope>DEPHOSPHORYLATION AT SER-270</scope>
</reference>
<reference key="11">
    <citation type="journal article" date="2018" name="Nat. Struct. Mol. Biol.">
        <title>Architecture of Pol II(G) and molecular mechanism of transcription regulation by Gdown1.</title>
        <authorList>
            <person name="Jishage M."/>
            <person name="Yu X."/>
            <person name="Shi Y."/>
            <person name="Ganesan S.J."/>
            <person name="Chen W.Y."/>
            <person name="Sali A."/>
            <person name="Chait B.T."/>
            <person name="Asturias F.J."/>
            <person name="Roeder R.G."/>
        </authorList>
    </citation>
    <scope>STRUCTURE BY ELECTRON MICROSCOPY (3.90 ANGSTROMS) OF 300-316</scope>
    <scope>REGION</scope>
    <scope>FUNCTION (ISOFORM I)</scope>
    <scope>MUTAGENESIS OF 29-LYS-ARG-30; GLU-32; ARG-33; 49-LYS-LYS-50; ASP-53; 66-GLU-GLU-67 AND 303-LEU-LEU-304</scope>
</reference>
<keyword id="KW-0002">3D-structure</keyword>
<keyword id="KW-0025">Alternative splicing</keyword>
<keyword id="KW-0175">Coiled coil</keyword>
<keyword id="KW-0240">DNA-directed RNA polymerase</keyword>
<keyword id="KW-0539">Nucleus</keyword>
<keyword id="KW-0597">Phosphoprotein</keyword>
<keyword id="KW-1267">Proteomics identification</keyword>
<keyword id="KW-1185">Reference proteome</keyword>
<keyword id="KW-0804">Transcription</keyword>
<gene>
    <name type="primary">POLR2M</name>
    <name type="synonym">GRINL1A</name>
</gene>
<dbReference type="EMBL" id="AF326773">
    <property type="protein sequence ID" value="AAK92284.2"/>
    <property type="molecule type" value="mRNA"/>
</dbReference>
<dbReference type="EMBL" id="AY207007">
    <property type="protein sequence ID" value="AAO39707.1"/>
    <property type="molecule type" value="mRNA"/>
</dbReference>
<dbReference type="EMBL" id="AY353061">
    <property type="protein sequence ID" value="AAQ76837.1"/>
    <property type="molecule type" value="mRNA"/>
</dbReference>
<dbReference type="EMBL" id="AK074767">
    <property type="protein sequence ID" value="BAC11193.1"/>
    <property type="molecule type" value="mRNA"/>
</dbReference>
<dbReference type="EMBL" id="AK074955">
    <property type="protein sequence ID" value="BAC11313.1"/>
    <property type="molecule type" value="mRNA"/>
</dbReference>
<dbReference type="EMBL" id="AK128618">
    <property type="protein sequence ID" value="BAC87533.1"/>
    <property type="molecule type" value="mRNA"/>
</dbReference>
<dbReference type="EMBL" id="AC090651">
    <property type="status" value="NOT_ANNOTATED_CDS"/>
    <property type="molecule type" value="Genomic_DNA"/>
</dbReference>
<dbReference type="EMBL" id="CH471082">
    <property type="protein sequence ID" value="EAW77525.1"/>
    <property type="molecule type" value="Genomic_DNA"/>
</dbReference>
<dbReference type="EMBL" id="BC001510">
    <property type="protein sequence ID" value="AAH01510.1"/>
    <property type="molecule type" value="mRNA"/>
</dbReference>
<dbReference type="EMBL" id="AL050091">
    <property type="protein sequence ID" value="CAB43263.1"/>
    <property type="molecule type" value="mRNA"/>
</dbReference>
<dbReference type="CCDS" id="CCDS32252.1">
    <molecule id="P0CAP2-1"/>
</dbReference>
<dbReference type="CCDS" id="CCDS42045.1">
    <molecule id="P0CAP2-2"/>
</dbReference>
<dbReference type="PIR" id="T08740">
    <property type="entry name" value="T08740"/>
</dbReference>
<dbReference type="RefSeq" id="NP_001018112.1">
    <molecule id="P0CAP2-2"/>
    <property type="nucleotide sequence ID" value="NM_001018102.3"/>
</dbReference>
<dbReference type="RefSeq" id="NP_056347.1">
    <molecule id="P0CAP2-1"/>
    <property type="nucleotide sequence ID" value="NM_015532.5"/>
</dbReference>
<dbReference type="PDB" id="6DRD">
    <property type="method" value="EM"/>
    <property type="resolution" value="3.90 A"/>
    <property type="chains" value="M=300-316"/>
</dbReference>
<dbReference type="PDBsum" id="6DRD"/>
<dbReference type="EMDB" id="EMD-7997"/>
<dbReference type="SMR" id="P0CAP2"/>
<dbReference type="BioGRID" id="123498">
    <property type="interactions" value="137"/>
</dbReference>
<dbReference type="ComplexPortal" id="CPX-2387">
    <property type="entry name" value="DNA-directed RNA polymerase II complex, Pol II(G) variant"/>
</dbReference>
<dbReference type="DIP" id="DIP-61933N"/>
<dbReference type="FunCoup" id="P0CAP2">
    <property type="interactions" value="1616"/>
</dbReference>
<dbReference type="IntAct" id="P0CAP2">
    <property type="interactions" value="78"/>
</dbReference>
<dbReference type="MINT" id="P0CAP2"/>
<dbReference type="STRING" id="9606.ENSP00000299638"/>
<dbReference type="GlyGen" id="P0CAP2">
    <property type="glycosylation" value="1 site, 1 O-linked glycan (1 site)"/>
</dbReference>
<dbReference type="iPTMnet" id="P0CAP2"/>
<dbReference type="PhosphoSitePlus" id="P0CAP2"/>
<dbReference type="BioMuta" id="POLR2M"/>
<dbReference type="DMDM" id="238064986"/>
<dbReference type="jPOST" id="P0CAP2"/>
<dbReference type="MassIVE" id="P0CAP2"/>
<dbReference type="PaxDb" id="9606-ENSP00000299638"/>
<dbReference type="PeptideAtlas" id="P0CAP2"/>
<dbReference type="ProteomicsDB" id="52428">
    <molecule id="P0CAP2-1"/>
</dbReference>
<dbReference type="ProteomicsDB" id="52429">
    <molecule id="P0CAP2-2"/>
</dbReference>
<dbReference type="ProteomicsDB" id="52430">
    <molecule id="P0CAP2-3"/>
</dbReference>
<dbReference type="Pumba" id="P0CAP2"/>
<dbReference type="Antibodypedia" id="57855">
    <property type="antibodies" value="96 antibodies from 14 providers"/>
</dbReference>
<dbReference type="DNASU" id="81488"/>
<dbReference type="Ensembl" id="ENST00000299638.8">
    <molecule id="P0CAP2-1"/>
    <property type="protein sequence ID" value="ENSP00000299638.3"/>
    <property type="gene ID" value="ENSG00000255529.9"/>
</dbReference>
<dbReference type="Ensembl" id="ENST00000380557.4">
    <molecule id="P0CAP2-2"/>
    <property type="protein sequence ID" value="ENSP00000369930.4"/>
    <property type="gene ID" value="ENSG00000255529.9"/>
</dbReference>
<dbReference type="Ensembl" id="ENST00000482852.5">
    <molecule id="P0CAP2-3"/>
    <property type="protein sequence ID" value="ENSP00000432615.1"/>
    <property type="gene ID" value="ENSG00000255529.9"/>
</dbReference>
<dbReference type="GeneID" id="81488"/>
<dbReference type="KEGG" id="hsa:81488"/>
<dbReference type="MANE-Select" id="ENST00000299638.8">
    <property type="protein sequence ID" value="ENSP00000299638.3"/>
    <property type="RefSeq nucleotide sequence ID" value="NM_015532.5"/>
    <property type="RefSeq protein sequence ID" value="NP_056347.1"/>
</dbReference>
<dbReference type="UCSC" id="uc002aet.6">
    <molecule id="P0CAP2-1"/>
    <property type="organism name" value="human"/>
</dbReference>
<dbReference type="AGR" id="HGNC:14862"/>
<dbReference type="CTD" id="81488"/>
<dbReference type="DisGeNET" id="81488"/>
<dbReference type="GeneCards" id="POLR2M"/>
<dbReference type="HGNC" id="HGNC:14862">
    <property type="gene designation" value="POLR2M"/>
</dbReference>
<dbReference type="HPA" id="ENSG00000255529">
    <property type="expression patterns" value="Low tissue specificity"/>
</dbReference>
<dbReference type="MIM" id="606485">
    <property type="type" value="gene"/>
</dbReference>
<dbReference type="neXtProt" id="NX_P0CAP2"/>
<dbReference type="OpenTargets" id="ENSG00000255529"/>
<dbReference type="PharmGKB" id="PA28986"/>
<dbReference type="VEuPathDB" id="HostDB:ENSG00000255529"/>
<dbReference type="eggNOG" id="ENOG502S3HI">
    <property type="taxonomic scope" value="Eukaryota"/>
</dbReference>
<dbReference type="GeneTree" id="ENSGT00950000183065"/>
<dbReference type="HOGENOM" id="CLU_051512_0_0_1"/>
<dbReference type="InParanoid" id="P0CAP2"/>
<dbReference type="OMA" id="YQQAFAH"/>
<dbReference type="OrthoDB" id="2408655at2759"/>
<dbReference type="PAN-GO" id="P0CAP2">
    <property type="GO annotations" value="5 GO annotations based on evolutionary models"/>
</dbReference>
<dbReference type="PhylomeDB" id="P0CAP2"/>
<dbReference type="TreeFam" id="TF332945"/>
<dbReference type="PathwayCommons" id="P0CAP2"/>
<dbReference type="SignaLink" id="P0CAP2"/>
<dbReference type="SIGNOR" id="P0CAP2"/>
<dbReference type="BioGRID-ORCS" id="81488">
    <property type="hits" value="155 hits in 1107 CRISPR screens"/>
</dbReference>
<dbReference type="ChiTaRS" id="POLR2M">
    <property type="organism name" value="human"/>
</dbReference>
<dbReference type="GenomeRNAi" id="81488"/>
<dbReference type="Pharos" id="P0CAP2">
    <property type="development level" value="Tbio"/>
</dbReference>
<dbReference type="Proteomes" id="UP000005640">
    <property type="component" value="Chromosome 15"/>
</dbReference>
<dbReference type="RNAct" id="P0CAP2">
    <property type="molecule type" value="protein"/>
</dbReference>
<dbReference type="Bgee" id="ENSG00000255529">
    <property type="expression patterns" value="Expressed in germinal epithelium of ovary and 207 other cell types or tissues"/>
</dbReference>
<dbReference type="ExpressionAtlas" id="P0CAP2">
    <property type="expression patterns" value="baseline and differential"/>
</dbReference>
<dbReference type="GO" id="GO:0031674">
    <property type="term" value="C:I band"/>
    <property type="evidence" value="ECO:0000318"/>
    <property type="project" value="GO_Central"/>
</dbReference>
<dbReference type="GO" id="GO:0043025">
    <property type="term" value="C:neuronal cell body"/>
    <property type="evidence" value="ECO:0007669"/>
    <property type="project" value="Ensembl"/>
</dbReference>
<dbReference type="GO" id="GO:0005635">
    <property type="term" value="C:nuclear envelope"/>
    <property type="evidence" value="ECO:0000314"/>
    <property type="project" value="LIFEdb"/>
</dbReference>
<dbReference type="GO" id="GO:0005665">
    <property type="term" value="C:RNA polymerase II, core complex"/>
    <property type="evidence" value="ECO:0000353"/>
    <property type="project" value="FlyBase"/>
</dbReference>
<dbReference type="GO" id="GO:0097550">
    <property type="term" value="C:transcription preinitiation complex"/>
    <property type="evidence" value="ECO:0000314"/>
    <property type="project" value="UniProtKB"/>
</dbReference>
<dbReference type="GO" id="GO:0000993">
    <property type="term" value="F:RNA polymerase II complex binding"/>
    <property type="evidence" value="ECO:0000314"/>
    <property type="project" value="UniProtKB"/>
</dbReference>
<dbReference type="GO" id="GO:0003711">
    <property type="term" value="F:transcription elongation factor activity"/>
    <property type="evidence" value="ECO:0007669"/>
    <property type="project" value="InterPro"/>
</dbReference>
<dbReference type="GO" id="GO:0051685">
    <property type="term" value="P:maintenance of ER location"/>
    <property type="evidence" value="ECO:0000318"/>
    <property type="project" value="GO_Central"/>
</dbReference>
<dbReference type="GO" id="GO:0006368">
    <property type="term" value="P:transcription elongation by RNA polymerase II"/>
    <property type="evidence" value="ECO:0007669"/>
    <property type="project" value="InterPro"/>
</dbReference>
<dbReference type="InterPro" id="IPR026213">
    <property type="entry name" value="GRINL1"/>
</dbReference>
<dbReference type="InterPro" id="IPR051375">
    <property type="entry name" value="Tuftelin_GRINL1A/MYZAP/CCD68"/>
</dbReference>
<dbReference type="PANTHER" id="PTHR23171:SF5">
    <property type="entry name" value="DNA-DIRECTED RNA POLYMERASE II SUBUNIT GRINL1A"/>
    <property type="match status" value="1"/>
</dbReference>
<dbReference type="PANTHER" id="PTHR23171">
    <property type="entry name" value="GDOWN1"/>
    <property type="match status" value="1"/>
</dbReference>
<dbReference type="Pfam" id="PF15328">
    <property type="entry name" value="GCOM2"/>
    <property type="match status" value="1"/>
</dbReference>
<dbReference type="PRINTS" id="PR02085">
    <property type="entry name" value="POLR2GRINL1"/>
</dbReference>
<comment type="function">
    <molecule>Isoform 1</molecule>
    <text evidence="4 5">Appears to be a stable component of the Pol II(G) complex form of RNA polymerase II (Pol II). Pol II synthesizes mRNA precursors and many functional non-coding RNAs and is the central component of the basal RNA polymerase II transcription machinery. May play a role in the Mediator complex-dependent regulation of transcription activation. Acts as a negative regulator of transcriptional activation; this repression is relieved by the Mediator complex, which restores Pol II(G) activator-dependent transcription to a level equivalent to that of Pol II.</text>
</comment>
<comment type="subunit">
    <molecule>Isoform 1</molecule>
    <text evidence="4 5">Component of the Pol II(G) complex, which contains the RNA polymerase II (Pol II) core complex subunits and POLR2M isoform 1. Pol II(G) appears to be an abundant form of Pol II.</text>
</comment>
<comment type="subcellular location">
    <molecule>Isoform 1</molecule>
    <subcellularLocation>
        <location evidence="9">Nucleus</location>
    </subcellularLocation>
</comment>
<comment type="alternative products">
    <event type="alternative splicing"/>
    <isoform>
        <id>P0CAP2-1</id>
        <name>1</name>
        <name>Gdown1</name>
        <sequence type="displayed"/>
    </isoform>
    <isoform>
        <id>P0CAP2-2</id>
        <name>2</name>
        <name>Gdown6</name>
        <sequence type="described" ref="VSP_037387"/>
    </isoform>
    <isoform>
        <id>P0CAP2-3</id>
        <name>3</name>
        <sequence type="described" ref="VSP_037388"/>
    </isoform>
    <isoform>
        <id>Q6EEV4-1</id>
        <name>4</name>
        <name>Gdown4</name>
        <sequence type="external"/>
    </isoform>
    <isoform>
        <id>Q6EEV4-2</id>
        <name>5</name>
        <name>Gdown3</name>
        <sequence type="external"/>
    </isoform>
    <isoform>
        <id>P0CAP1-11</id>
        <name>11</name>
        <name>Gcom1</name>
        <name>GRINL1A complex locus protein 1</name>
        <sequence type="external"/>
    </isoform>
    <text>Additional isoforms seem to exist.</text>
</comment>
<comment type="tissue specificity">
    <text evidence="3">Detected in adult an fetal brain. Detected in heart, kidney, skeletal muscle, small intestine, lung, prostate and testis.</text>
</comment>
<comment type="PTM">
    <text evidence="6">Dephosphorylated at Ser-270 by the PNUTS-PP1 complex, promoting RNA polymerase II transcription pause-release.</text>
</comment>
<comment type="miscellaneous">
    <text>The adjacent MYZAP and POLR2M genes are part of a complex transcription unit. The respective transcripts derive from different promoters and are alternatively spliced. In human, some transcripts of the upstream promoter of MYZAP use exons of the downstream POLR2M gene.</text>
</comment>
<comment type="similarity">
    <text evidence="9">Belongs to the GRINL1 family.</text>
</comment>
<organism>
    <name type="scientific">Homo sapiens</name>
    <name type="common">Human</name>
    <dbReference type="NCBI Taxonomy" id="9606"/>
    <lineage>
        <taxon>Eukaryota</taxon>
        <taxon>Metazoa</taxon>
        <taxon>Chordata</taxon>
        <taxon>Craniata</taxon>
        <taxon>Vertebrata</taxon>
        <taxon>Euteleostomi</taxon>
        <taxon>Mammalia</taxon>
        <taxon>Eutheria</taxon>
        <taxon>Euarchontoglires</taxon>
        <taxon>Primates</taxon>
        <taxon>Haplorrhini</taxon>
        <taxon>Catarrhini</taxon>
        <taxon>Hominidae</taxon>
        <taxon>Homo</taxon>
    </lineage>
</organism>
<proteinExistence type="evidence at protein level"/>
<name>GRL1A_HUMAN</name>
<accession>P0CAP2</accession>
<accession>Q6EER8</accession>
<accession>Q6EES2</accession>
<accession>Q6EEV3</accession>
<accession>Q6EF00</accession>
<accession>Q6EF01</accession>
<accession>Q6EF02</accession>
<accession>Q6EF46</accession>
<accession>Q6EFN8</accession>
<accession>Q6EM48</accession>
<accession>Q6K046</accession>
<accession>Q6K050</accession>
<accession>Q6K051</accession>
<accession>Q6ZQZ3</accession>
<accession>Q8NC58</accession>
<accession>Q8NCF3</accession>
<accession>Q96DI5</accession>
<accession>Q96JB7</accession>
<accession>Q96NF5</accession>
<accession>Q9Y3V6</accession>